<organism>
    <name type="scientific">Arabidopsis thaliana</name>
    <name type="common">Mouse-ear cress</name>
    <dbReference type="NCBI Taxonomy" id="3702"/>
    <lineage>
        <taxon>Eukaryota</taxon>
        <taxon>Viridiplantae</taxon>
        <taxon>Streptophyta</taxon>
        <taxon>Embryophyta</taxon>
        <taxon>Tracheophyta</taxon>
        <taxon>Spermatophyta</taxon>
        <taxon>Magnoliopsida</taxon>
        <taxon>eudicotyledons</taxon>
        <taxon>Gunneridae</taxon>
        <taxon>Pentapetalae</taxon>
        <taxon>rosids</taxon>
        <taxon>malvids</taxon>
        <taxon>Brassicales</taxon>
        <taxon>Brassicaceae</taxon>
        <taxon>Camelineae</taxon>
        <taxon>Arabidopsis</taxon>
    </lineage>
</organism>
<reference key="1">
    <citation type="journal article" date="1998" name="Biochim. Biophys. Acta">
        <title>Cloning of the cDNA for glutamyl-tRNA synthetase from Arabidopsis thaliana.</title>
        <authorList>
            <person name="Day I.S."/>
            <person name="Golovkin M."/>
            <person name="Reddy A.S."/>
        </authorList>
    </citation>
    <scope>NUCLEOTIDE SEQUENCE [MRNA]</scope>
</reference>
<reference key="2">
    <citation type="journal article" date="2000" name="Nature">
        <title>Sequence and analysis of chromosome 5 of the plant Arabidopsis thaliana.</title>
        <authorList>
            <person name="Tabata S."/>
            <person name="Kaneko T."/>
            <person name="Nakamura Y."/>
            <person name="Kotani H."/>
            <person name="Kato T."/>
            <person name="Asamizu E."/>
            <person name="Miyajima N."/>
            <person name="Sasamoto S."/>
            <person name="Kimura T."/>
            <person name="Hosouchi T."/>
            <person name="Kawashima K."/>
            <person name="Kohara M."/>
            <person name="Matsumoto M."/>
            <person name="Matsuno A."/>
            <person name="Muraki A."/>
            <person name="Nakayama S."/>
            <person name="Nakazaki N."/>
            <person name="Naruo K."/>
            <person name="Okumura S."/>
            <person name="Shinpo S."/>
            <person name="Takeuchi C."/>
            <person name="Wada T."/>
            <person name="Watanabe A."/>
            <person name="Yamada M."/>
            <person name="Yasuda M."/>
            <person name="Sato S."/>
            <person name="de la Bastide M."/>
            <person name="Huang E."/>
            <person name="Spiegel L."/>
            <person name="Gnoj L."/>
            <person name="O'Shaughnessy A."/>
            <person name="Preston R."/>
            <person name="Habermann K."/>
            <person name="Murray J."/>
            <person name="Johnson D."/>
            <person name="Rohlfing T."/>
            <person name="Nelson J."/>
            <person name="Stoneking T."/>
            <person name="Pepin K."/>
            <person name="Spieth J."/>
            <person name="Sekhon M."/>
            <person name="Armstrong J."/>
            <person name="Becker M."/>
            <person name="Belter E."/>
            <person name="Cordum H."/>
            <person name="Cordes M."/>
            <person name="Courtney L."/>
            <person name="Courtney W."/>
            <person name="Dante M."/>
            <person name="Du H."/>
            <person name="Edwards J."/>
            <person name="Fryman J."/>
            <person name="Haakensen B."/>
            <person name="Lamar E."/>
            <person name="Latreille P."/>
            <person name="Leonard S."/>
            <person name="Meyer R."/>
            <person name="Mulvaney E."/>
            <person name="Ozersky P."/>
            <person name="Riley A."/>
            <person name="Strowmatt C."/>
            <person name="Wagner-McPherson C."/>
            <person name="Wollam A."/>
            <person name="Yoakum M."/>
            <person name="Bell M."/>
            <person name="Dedhia N."/>
            <person name="Parnell L."/>
            <person name="Shah R."/>
            <person name="Rodriguez M."/>
            <person name="Hoon See L."/>
            <person name="Vil D."/>
            <person name="Baker J."/>
            <person name="Kirchoff K."/>
            <person name="Toth K."/>
            <person name="King L."/>
            <person name="Bahret A."/>
            <person name="Miller B."/>
            <person name="Marra M.A."/>
            <person name="Martienssen R."/>
            <person name="McCombie W.R."/>
            <person name="Wilson R.K."/>
            <person name="Murphy G."/>
            <person name="Bancroft I."/>
            <person name="Volckaert G."/>
            <person name="Wambutt R."/>
            <person name="Duesterhoeft A."/>
            <person name="Stiekema W."/>
            <person name="Pohl T."/>
            <person name="Entian K.-D."/>
            <person name="Terryn N."/>
            <person name="Hartley N."/>
            <person name="Bent E."/>
            <person name="Johnson S."/>
            <person name="Langham S.-A."/>
            <person name="McCullagh B."/>
            <person name="Robben J."/>
            <person name="Grymonprez B."/>
            <person name="Zimmermann W."/>
            <person name="Ramsperger U."/>
            <person name="Wedler H."/>
            <person name="Balke K."/>
            <person name="Wedler E."/>
            <person name="Peters S."/>
            <person name="van Staveren M."/>
            <person name="Dirkse W."/>
            <person name="Mooijman P."/>
            <person name="Klein Lankhorst R."/>
            <person name="Weitzenegger T."/>
            <person name="Bothe G."/>
            <person name="Rose M."/>
            <person name="Hauf J."/>
            <person name="Berneiser S."/>
            <person name="Hempel S."/>
            <person name="Feldpausch M."/>
            <person name="Lamberth S."/>
            <person name="Villarroel R."/>
            <person name="Gielen J."/>
            <person name="Ardiles W."/>
            <person name="Bents O."/>
            <person name="Lemcke K."/>
            <person name="Kolesov G."/>
            <person name="Mayer K.F.X."/>
            <person name="Rudd S."/>
            <person name="Schoof H."/>
            <person name="Schueller C."/>
            <person name="Zaccaria P."/>
            <person name="Mewes H.-W."/>
            <person name="Bevan M."/>
            <person name="Fransz P.F."/>
        </authorList>
    </citation>
    <scope>NUCLEOTIDE SEQUENCE [LARGE SCALE GENOMIC DNA]</scope>
    <source>
        <strain>cv. Columbia</strain>
    </source>
</reference>
<reference key="3">
    <citation type="journal article" date="2017" name="Plant J.">
        <title>Araport11: a complete reannotation of the Arabidopsis thaliana reference genome.</title>
        <authorList>
            <person name="Cheng C.Y."/>
            <person name="Krishnakumar V."/>
            <person name="Chan A.P."/>
            <person name="Thibaud-Nissen F."/>
            <person name="Schobel S."/>
            <person name="Town C.D."/>
        </authorList>
    </citation>
    <scope>GENOME REANNOTATION</scope>
    <source>
        <strain>cv. Columbia</strain>
    </source>
</reference>
<reference key="4">
    <citation type="journal article" date="2003" name="Science">
        <title>Empirical analysis of transcriptional activity in the Arabidopsis genome.</title>
        <authorList>
            <person name="Yamada K."/>
            <person name="Lim J."/>
            <person name="Dale J.M."/>
            <person name="Chen H."/>
            <person name="Shinn P."/>
            <person name="Palm C.J."/>
            <person name="Southwick A.M."/>
            <person name="Wu H.C."/>
            <person name="Kim C.J."/>
            <person name="Nguyen M."/>
            <person name="Pham P.K."/>
            <person name="Cheuk R.F."/>
            <person name="Karlin-Newmann G."/>
            <person name="Liu S.X."/>
            <person name="Lam B."/>
            <person name="Sakano H."/>
            <person name="Wu T."/>
            <person name="Yu G."/>
            <person name="Miranda M."/>
            <person name="Quach H.L."/>
            <person name="Tripp M."/>
            <person name="Chang C.H."/>
            <person name="Lee J.M."/>
            <person name="Toriumi M.J."/>
            <person name="Chan M.M."/>
            <person name="Tang C.C."/>
            <person name="Onodera C.S."/>
            <person name="Deng J.M."/>
            <person name="Akiyama K."/>
            <person name="Ansari Y."/>
            <person name="Arakawa T."/>
            <person name="Banh J."/>
            <person name="Banno F."/>
            <person name="Bowser L."/>
            <person name="Brooks S.Y."/>
            <person name="Carninci P."/>
            <person name="Chao Q."/>
            <person name="Choy N."/>
            <person name="Enju A."/>
            <person name="Goldsmith A.D."/>
            <person name="Gurjal M."/>
            <person name="Hansen N.F."/>
            <person name="Hayashizaki Y."/>
            <person name="Johnson-Hopson C."/>
            <person name="Hsuan V.W."/>
            <person name="Iida K."/>
            <person name="Karnes M."/>
            <person name="Khan S."/>
            <person name="Koesema E."/>
            <person name="Ishida J."/>
            <person name="Jiang P.X."/>
            <person name="Jones T."/>
            <person name="Kawai J."/>
            <person name="Kamiya A."/>
            <person name="Meyers C."/>
            <person name="Nakajima M."/>
            <person name="Narusaka M."/>
            <person name="Seki M."/>
            <person name="Sakurai T."/>
            <person name="Satou M."/>
            <person name="Tamse R."/>
            <person name="Vaysberg M."/>
            <person name="Wallender E.K."/>
            <person name="Wong C."/>
            <person name="Yamamura Y."/>
            <person name="Yuan S."/>
            <person name="Shinozaki K."/>
            <person name="Davis R.W."/>
            <person name="Theologis A."/>
            <person name="Ecker J.R."/>
        </authorList>
    </citation>
    <scope>NUCLEOTIDE SEQUENCE [LARGE SCALE MRNA]</scope>
    <source>
        <strain>cv. Columbia</strain>
    </source>
</reference>
<reference key="5">
    <citation type="submission" date="2006-07" db="EMBL/GenBank/DDBJ databases">
        <title>Large-scale analysis of RIKEN Arabidopsis full-length (RAFL) cDNAs.</title>
        <authorList>
            <person name="Totoki Y."/>
            <person name="Seki M."/>
            <person name="Ishida J."/>
            <person name="Nakajima M."/>
            <person name="Enju A."/>
            <person name="Kamiya A."/>
            <person name="Narusaka M."/>
            <person name="Shin-i T."/>
            <person name="Nakagawa M."/>
            <person name="Sakamoto N."/>
            <person name="Oishi K."/>
            <person name="Kohara Y."/>
            <person name="Kobayashi M."/>
            <person name="Toyoda A."/>
            <person name="Sakaki Y."/>
            <person name="Sakurai T."/>
            <person name="Iida K."/>
            <person name="Akiyama K."/>
            <person name="Satou M."/>
            <person name="Toyoda T."/>
            <person name="Konagaya A."/>
            <person name="Carninci P."/>
            <person name="Kawai J."/>
            <person name="Hayashizaki Y."/>
            <person name="Shinozaki K."/>
        </authorList>
    </citation>
    <scope>NUCLEOTIDE SEQUENCE [LARGE SCALE MRNA]</scope>
    <source>
        <strain>cv. Columbia</strain>
    </source>
</reference>
<reference key="6">
    <citation type="journal article" date="2005" name="Plant J.">
        <title>Requirement of aminoacyl-tRNA synthetases for gametogenesis and embryo development in Arabidopsis.</title>
        <authorList>
            <person name="Berg M."/>
            <person name="Rogers R."/>
            <person name="Muralla R."/>
            <person name="Meinke D."/>
        </authorList>
    </citation>
    <scope>SUBCELLULAR LOCATION</scope>
</reference>
<reference key="7">
    <citation type="journal article" date="2005" name="Proc. Natl. Acad. Sci. U.S.A.">
        <title>Dual targeting is the rule for organellar aminoacyl-tRNA synthetases in Arabidopsis thaliana.</title>
        <authorList>
            <person name="Duchene A.-M."/>
            <person name="Giritch A."/>
            <person name="Hoffmann B."/>
            <person name="Cognat V."/>
            <person name="Lancelin D."/>
            <person name="Peeters N.M."/>
            <person name="Zaepfel M."/>
            <person name="Marechal-Drouard L."/>
            <person name="Small I.D."/>
        </authorList>
    </citation>
    <scope>SUBCELLULAR LOCATION</scope>
</reference>
<reference key="8">
    <citation type="journal article" date="2009" name="BMC Bioinformatics">
        <title>AtPIN: Arabidopsis thaliana protein interaction network.</title>
        <authorList>
            <person name="Brandao M.M."/>
            <person name="Dantas L.L."/>
            <person name="Silva-Filho M.C."/>
        </authorList>
    </citation>
    <scope>INTERACTION WITH GLN2; COL4 AND RPP13L4/ZAR1</scope>
</reference>
<keyword id="KW-0030">Aminoacyl-tRNA synthetase</keyword>
<keyword id="KW-0067">ATP-binding</keyword>
<keyword id="KW-0963">Cytoplasm</keyword>
<keyword id="KW-0436">Ligase</keyword>
<keyword id="KW-0547">Nucleotide-binding</keyword>
<keyword id="KW-0648">Protein biosynthesis</keyword>
<keyword id="KW-1185">Reference proteome</keyword>
<evidence type="ECO:0000250" key="1"/>
<evidence type="ECO:0000250" key="2">
    <source>
        <dbReference type="UniProtKB" id="P46655"/>
    </source>
</evidence>
<evidence type="ECO:0000256" key="3">
    <source>
        <dbReference type="SAM" id="MobiDB-lite"/>
    </source>
</evidence>
<evidence type="ECO:0000269" key="4">
    <source>
    </source>
</evidence>
<evidence type="ECO:0000303" key="5">
    <source>
    </source>
</evidence>
<evidence type="ECO:0000305" key="6"/>
<evidence type="ECO:0000305" key="7">
    <source>
    </source>
</evidence>
<evidence type="ECO:0000305" key="8">
    <source>
    </source>
</evidence>
<evidence type="ECO:0000312" key="9">
    <source>
        <dbReference type="Araport" id="AT5G26710"/>
    </source>
</evidence>
<evidence type="ECO:0000312" key="10">
    <source>
        <dbReference type="EMBL" id="AAC13597.1"/>
    </source>
</evidence>
<comment type="function">
    <text evidence="2">Catalyzes the attachment of glutamate to tRNA(Glu) in a two-step reaction: glutamate is first activated by ATP to form Glu-AMP and then transferred to the acceptor end of tRNA(Glu).</text>
</comment>
<comment type="catalytic activity">
    <reaction evidence="6">
        <text>tRNA(Glu) + L-glutamate + ATP = L-glutamyl-tRNA(Glu) + AMP + diphosphate</text>
        <dbReference type="Rhea" id="RHEA:23540"/>
        <dbReference type="Rhea" id="RHEA-COMP:9663"/>
        <dbReference type="Rhea" id="RHEA-COMP:9680"/>
        <dbReference type="ChEBI" id="CHEBI:29985"/>
        <dbReference type="ChEBI" id="CHEBI:30616"/>
        <dbReference type="ChEBI" id="CHEBI:33019"/>
        <dbReference type="ChEBI" id="CHEBI:78442"/>
        <dbReference type="ChEBI" id="CHEBI:78520"/>
        <dbReference type="ChEBI" id="CHEBI:456215"/>
        <dbReference type="EC" id="6.1.1.17"/>
    </reaction>
</comment>
<comment type="subunit">
    <text evidence="4">Interacts with GLN2, COL4 and RPP13L4/ZAR1.</text>
</comment>
<comment type="subcellular location">
    <subcellularLocation>
        <location evidence="7 8">Cytoplasm</location>
        <location evidence="7 8">Cytosol</location>
    </subcellularLocation>
</comment>
<comment type="similarity">
    <text evidence="6">Belongs to the class-I aminoacyl-tRNA synthetase family. Glutamate--tRNA ligase type 2 subfamily.</text>
</comment>
<comment type="sequence caution" evidence="6">
    <conflict type="erroneous gene model prediction">
        <sequence resource="EMBL-CDS" id="AAC13597"/>
    </conflict>
</comment>
<name>SYEC_ARATH</name>
<accession>O82462</accession>
<accession>O65253</accession>
<protein>
    <recommendedName>
        <fullName evidence="6">Glutamate--tRNA ligase, cytoplasmic</fullName>
        <ecNumber evidence="6">6.1.1.17</ecNumber>
    </recommendedName>
    <alternativeName>
        <fullName evidence="5">GluRSAt</fullName>
    </alternativeName>
    <alternativeName>
        <fullName evidence="6">Glutamyl-tRNA synthetase</fullName>
        <shortName evidence="6">GluRS</shortName>
    </alternativeName>
</protein>
<sequence length="719" mass="81065">MDGMKLSFPPESPPLSVIVALSLSASPVTIDSSAAATTVPSFVFSDGRKLNGATVLLRYVGRSAKKLPDFYGNNAFDSSQIDEWVDYASVFSSGSEFENACGRVDKYLESSTFLVGHSLSIADVAIWSALAGTGQRWESLRKSKKYQSLVRWFNSILDEYSEVLNKVLATYVKKGSGKPVAAPKSKDSQQAVKGDGQDKGKPEVDLPEAEIGKVKLRFAPEPSGYLHIGHAKAALLNKYFAERYQGEVIVRFDDTNPAKESNEFVDNLVKDIGTLGIKYEKVTYTSDYFPELMDMAEKLMREGKAYVDDTPREQMQKERMDGIDSKCRNHSVEENLKLWKEMIAGSERGLQCCVRGKFNMQDPNKAMRDPVYYRCNPMSHHRIGDKYKIYPTYDFACPFVDSLEGITHALRSSEYHDRNAQYFKVLEDMGLRQVQLYEFSRLNLVFTLLSKRKLLWFVQTGLVDGWDDPRFPTVQGIVRRGLKIEALIQFILEQGASKNLNLMEWDKLWSINKRIIDPVCPRHTAVVAERRVLFTLTDGPDEPFVRMIPKHKKFEGAGEKATTFTKSIWLEEADASAISVGEEVTLMDWGNAIVKEITKDEEGRVTALSGVLNLQGSVKTTKLKLTWLPDTNELVNLTLTEFDYLITKKKLEDDDEVADFVNPNTKKETLALGDSNMRNLKCGDVIQLERKGYFRCDVPFVKSSKPIVLFSIPDGRAAK</sequence>
<dbReference type="EC" id="6.1.1.17" evidence="6"/>
<dbReference type="EMBL" id="AF067773">
    <property type="protein sequence ID" value="AAC36469.1"/>
    <property type="molecule type" value="mRNA"/>
</dbReference>
<dbReference type="EMBL" id="AF058914">
    <property type="protein sequence ID" value="AAC13597.1"/>
    <property type="status" value="ALT_SEQ"/>
    <property type="molecule type" value="Genomic_DNA"/>
</dbReference>
<dbReference type="EMBL" id="CP002688">
    <property type="protein sequence ID" value="AED93573.1"/>
    <property type="molecule type" value="Genomic_DNA"/>
</dbReference>
<dbReference type="EMBL" id="AY099592">
    <property type="protein sequence ID" value="AAM20443.1"/>
    <property type="molecule type" value="mRNA"/>
</dbReference>
<dbReference type="EMBL" id="BT000248">
    <property type="protein sequence ID" value="AAN15567.1"/>
    <property type="molecule type" value="mRNA"/>
</dbReference>
<dbReference type="EMBL" id="AK226448">
    <property type="protein sequence ID" value="BAE98590.1"/>
    <property type="molecule type" value="mRNA"/>
</dbReference>
<dbReference type="PIR" id="T01200">
    <property type="entry name" value="T01200"/>
</dbReference>
<dbReference type="PIR" id="T52043">
    <property type="entry name" value="T52043"/>
</dbReference>
<dbReference type="RefSeq" id="NP_850874.1">
    <property type="nucleotide sequence ID" value="NM_180543.3"/>
</dbReference>
<dbReference type="SMR" id="O82462"/>
<dbReference type="DIP" id="DIP-48341N"/>
<dbReference type="FunCoup" id="O82462">
    <property type="interactions" value="2465"/>
</dbReference>
<dbReference type="IntAct" id="O82462">
    <property type="interactions" value="3"/>
</dbReference>
<dbReference type="STRING" id="3702.O82462"/>
<dbReference type="iPTMnet" id="O82462"/>
<dbReference type="MetOSite" id="O82462"/>
<dbReference type="PaxDb" id="3702-AT5G26710.1"/>
<dbReference type="ProteomicsDB" id="246385"/>
<dbReference type="EnsemblPlants" id="AT5G26710.1">
    <property type="protein sequence ID" value="AT5G26710.1"/>
    <property type="gene ID" value="AT5G26710"/>
</dbReference>
<dbReference type="GeneID" id="832718"/>
<dbReference type="Gramene" id="AT5G26710.1">
    <property type="protein sequence ID" value="AT5G26710.1"/>
    <property type="gene ID" value="AT5G26710"/>
</dbReference>
<dbReference type="KEGG" id="ath:AT5G26710"/>
<dbReference type="Araport" id="AT5G26710"/>
<dbReference type="TAIR" id="AT5G26710"/>
<dbReference type="eggNOG" id="KOG1147">
    <property type="taxonomic scope" value="Eukaryota"/>
</dbReference>
<dbReference type="HOGENOM" id="CLU_001882_1_2_1"/>
<dbReference type="InParanoid" id="O82462"/>
<dbReference type="OMA" id="CPVVDSH"/>
<dbReference type="PhylomeDB" id="O82462"/>
<dbReference type="BRENDA" id="6.1.1.17">
    <property type="organism ID" value="399"/>
</dbReference>
<dbReference type="CD-CODE" id="4299E36E">
    <property type="entry name" value="Nucleolus"/>
</dbReference>
<dbReference type="PRO" id="PR:O82462"/>
<dbReference type="Proteomes" id="UP000006548">
    <property type="component" value="Chromosome 5"/>
</dbReference>
<dbReference type="ExpressionAtlas" id="O82462">
    <property type="expression patterns" value="baseline and differential"/>
</dbReference>
<dbReference type="GO" id="GO:0005829">
    <property type="term" value="C:cytosol"/>
    <property type="evidence" value="ECO:0007005"/>
    <property type="project" value="TAIR"/>
</dbReference>
<dbReference type="GO" id="GO:0009536">
    <property type="term" value="C:plastid"/>
    <property type="evidence" value="ECO:0007005"/>
    <property type="project" value="TAIR"/>
</dbReference>
<dbReference type="GO" id="GO:0032991">
    <property type="term" value="C:protein-containing complex"/>
    <property type="evidence" value="ECO:0007669"/>
    <property type="project" value="UniProtKB-ARBA"/>
</dbReference>
<dbReference type="GO" id="GO:0005524">
    <property type="term" value="F:ATP binding"/>
    <property type="evidence" value="ECO:0007669"/>
    <property type="project" value="UniProtKB-KW"/>
</dbReference>
<dbReference type="GO" id="GO:0004818">
    <property type="term" value="F:glutamate-tRNA ligase activity"/>
    <property type="evidence" value="ECO:0007669"/>
    <property type="project" value="UniProtKB-EC"/>
</dbReference>
<dbReference type="GO" id="GO:0006424">
    <property type="term" value="P:glutamyl-tRNA aminoacylation"/>
    <property type="evidence" value="ECO:0007669"/>
    <property type="project" value="InterPro"/>
</dbReference>
<dbReference type="GO" id="GO:0009791">
    <property type="term" value="P:post-embryonic development"/>
    <property type="evidence" value="ECO:0007669"/>
    <property type="project" value="UniProtKB-ARBA"/>
</dbReference>
<dbReference type="GO" id="GO:0048608">
    <property type="term" value="P:reproductive structure development"/>
    <property type="evidence" value="ECO:0007669"/>
    <property type="project" value="UniProtKB-ARBA"/>
</dbReference>
<dbReference type="CDD" id="cd10289">
    <property type="entry name" value="GST_C_AaRS_like"/>
    <property type="match status" value="1"/>
</dbReference>
<dbReference type="FunFam" id="3.40.50.620:FF:000070">
    <property type="entry name" value="Bifunctional glutamate/proline--tRNA ligase"/>
    <property type="match status" value="1"/>
</dbReference>
<dbReference type="FunFam" id="1.20.1050.130:FF:000005">
    <property type="entry name" value="Glutamate--tRNA ligase cytoplasmic"/>
    <property type="match status" value="1"/>
</dbReference>
<dbReference type="FunFam" id="2.40.240.10:FF:000004">
    <property type="entry name" value="Glutamyl-tRNA synthetase, cytoplasmic"/>
    <property type="match status" value="1"/>
</dbReference>
<dbReference type="Gene3D" id="1.20.1050.130">
    <property type="match status" value="1"/>
</dbReference>
<dbReference type="Gene3D" id="3.40.50.620">
    <property type="entry name" value="HUPs"/>
    <property type="match status" value="1"/>
</dbReference>
<dbReference type="Gene3D" id="2.40.240.10">
    <property type="entry name" value="Ribosomal Protein L25, Chain P"/>
    <property type="match status" value="1"/>
</dbReference>
<dbReference type="HAMAP" id="MF_02076">
    <property type="entry name" value="Glu_tRNA_synth_type2"/>
    <property type="match status" value="1"/>
</dbReference>
<dbReference type="InterPro" id="IPR001412">
    <property type="entry name" value="aa-tRNA-synth_I_CS"/>
</dbReference>
<dbReference type="InterPro" id="IPR050132">
    <property type="entry name" value="Gln/Glu-tRNA_Ligase"/>
</dbReference>
<dbReference type="InterPro" id="IPR004526">
    <property type="entry name" value="Glu-tRNA-synth_arc/euk"/>
</dbReference>
<dbReference type="InterPro" id="IPR000924">
    <property type="entry name" value="Glu/Gln-tRNA-synth"/>
</dbReference>
<dbReference type="InterPro" id="IPR020058">
    <property type="entry name" value="Glu/Gln-tRNA-synth_Ib_cat-dom"/>
</dbReference>
<dbReference type="InterPro" id="IPR020059">
    <property type="entry name" value="Glu/Gln-tRNA-synth_Ib_codon-bd"/>
</dbReference>
<dbReference type="InterPro" id="IPR036282">
    <property type="entry name" value="Glutathione-S-Trfase_C_sf"/>
</dbReference>
<dbReference type="InterPro" id="IPR004046">
    <property type="entry name" value="GST_C"/>
</dbReference>
<dbReference type="InterPro" id="IPR020056">
    <property type="entry name" value="Rbsml_bL25/Gln-tRNA_synth_N"/>
</dbReference>
<dbReference type="InterPro" id="IPR011035">
    <property type="entry name" value="Ribosomal_bL25/Gln-tRNA_synth"/>
</dbReference>
<dbReference type="InterPro" id="IPR014729">
    <property type="entry name" value="Rossmann-like_a/b/a_fold"/>
</dbReference>
<dbReference type="InterPro" id="IPR049437">
    <property type="entry name" value="tRNA-synt_1c_C2"/>
</dbReference>
<dbReference type="NCBIfam" id="TIGR00463">
    <property type="entry name" value="gltX_arch"/>
    <property type="match status" value="1"/>
</dbReference>
<dbReference type="PANTHER" id="PTHR43097:SF5">
    <property type="entry name" value="GLUTAMATE--TRNA LIGASE"/>
    <property type="match status" value="1"/>
</dbReference>
<dbReference type="PANTHER" id="PTHR43097">
    <property type="entry name" value="GLUTAMINE-TRNA LIGASE"/>
    <property type="match status" value="1"/>
</dbReference>
<dbReference type="Pfam" id="PF00043">
    <property type="entry name" value="GST_C"/>
    <property type="match status" value="1"/>
</dbReference>
<dbReference type="Pfam" id="PF00749">
    <property type="entry name" value="tRNA-synt_1c"/>
    <property type="match status" value="1"/>
</dbReference>
<dbReference type="Pfam" id="PF03950">
    <property type="entry name" value="tRNA-synt_1c_C"/>
    <property type="match status" value="1"/>
</dbReference>
<dbReference type="Pfam" id="PF20974">
    <property type="entry name" value="tRNA-synt_1c_C2"/>
    <property type="match status" value="1"/>
</dbReference>
<dbReference type="PRINTS" id="PR00987">
    <property type="entry name" value="TRNASYNTHGLU"/>
</dbReference>
<dbReference type="SUPFAM" id="SSF47616">
    <property type="entry name" value="GST C-terminal domain-like"/>
    <property type="match status" value="1"/>
</dbReference>
<dbReference type="SUPFAM" id="SSF52374">
    <property type="entry name" value="Nucleotidylyl transferase"/>
    <property type="match status" value="1"/>
</dbReference>
<dbReference type="SUPFAM" id="SSF50715">
    <property type="entry name" value="Ribosomal protein L25-like"/>
    <property type="match status" value="1"/>
</dbReference>
<dbReference type="PROSITE" id="PS00178">
    <property type="entry name" value="AA_TRNA_LIGASE_I"/>
    <property type="match status" value="1"/>
</dbReference>
<feature type="chain" id="PRO_0000433543" description="Glutamate--tRNA ligase, cytoplasmic">
    <location>
        <begin position="1"/>
        <end position="719"/>
    </location>
</feature>
<feature type="region of interest" description="Disordered" evidence="3">
    <location>
        <begin position="176"/>
        <end position="205"/>
    </location>
</feature>
<feature type="short sequence motif" description="'HIGH' region" evidence="6">
    <location>
        <begin position="220"/>
        <end position="230"/>
    </location>
</feature>
<feature type="short sequence motif" description="'KMSKS' region" evidence="6">
    <location>
        <begin position="448"/>
        <end position="452"/>
    </location>
</feature>
<feature type="compositionally biased region" description="Basic and acidic residues" evidence="3">
    <location>
        <begin position="195"/>
        <end position="204"/>
    </location>
</feature>
<feature type="binding site" evidence="1">
    <location>
        <position position="93"/>
    </location>
    <ligand>
        <name>ATP</name>
        <dbReference type="ChEBI" id="CHEBI:30616"/>
    </ligand>
</feature>
<feature type="binding site" evidence="1">
    <location>
        <begin position="217"/>
        <end position="219"/>
    </location>
    <ligand>
        <name>L-glutamate</name>
        <dbReference type="ChEBI" id="CHEBI:29985"/>
    </ligand>
</feature>
<feature type="binding site" evidence="1">
    <location>
        <position position="227"/>
    </location>
    <ligand>
        <name>ATP</name>
        <dbReference type="ChEBI" id="CHEBI:30616"/>
    </ligand>
</feature>
<feature type="binding site" evidence="1">
    <location>
        <begin position="393"/>
        <end position="397"/>
    </location>
    <ligand>
        <name>L-glutamate</name>
        <dbReference type="ChEBI" id="CHEBI:29985"/>
    </ligand>
</feature>
<feature type="binding site" evidence="1">
    <location>
        <position position="411"/>
    </location>
    <ligand>
        <name>L-glutamate</name>
        <dbReference type="ChEBI" id="CHEBI:29985"/>
    </ligand>
</feature>
<feature type="binding site" evidence="1">
    <location>
        <position position="414"/>
    </location>
    <ligand>
        <name>ATP</name>
        <dbReference type="ChEBI" id="CHEBI:30616"/>
    </ligand>
</feature>
<feature type="binding site" evidence="1">
    <location>
        <begin position="448"/>
        <end position="452"/>
    </location>
    <ligand>
        <name>ATP</name>
        <dbReference type="ChEBI" id="CHEBI:30616"/>
    </ligand>
</feature>
<gene>
    <name evidence="9" type="ordered locus">At5g26710</name>
    <name evidence="10" type="ORF">F21E10.12</name>
</gene>
<proteinExistence type="evidence at protein level"/>